<feature type="chain" id="PRO_0000313683" description="Uroporphyrinogen decarboxylase">
    <location>
        <begin position="1"/>
        <end position="324"/>
    </location>
</feature>
<feature type="binding site" evidence="1">
    <location>
        <begin position="14"/>
        <end position="18"/>
    </location>
    <ligand>
        <name>substrate</name>
    </ligand>
</feature>
<feature type="binding site" evidence="1">
    <location>
        <position position="32"/>
    </location>
    <ligand>
        <name>substrate</name>
    </ligand>
</feature>
<feature type="binding site" evidence="1">
    <location>
        <position position="63"/>
    </location>
    <ligand>
        <name>substrate</name>
    </ligand>
</feature>
<feature type="binding site" evidence="1">
    <location>
        <position position="136"/>
    </location>
    <ligand>
        <name>substrate</name>
    </ligand>
</feature>
<feature type="binding site" evidence="1">
    <location>
        <position position="191"/>
    </location>
    <ligand>
        <name>substrate</name>
    </ligand>
</feature>
<feature type="binding site" evidence="1">
    <location>
        <position position="302"/>
    </location>
    <ligand>
        <name>substrate</name>
    </ligand>
</feature>
<feature type="site" description="Transition state stabilizer" evidence="1">
    <location>
        <position position="63"/>
    </location>
</feature>
<reference key="1">
    <citation type="journal article" date="2006" name="PLoS Genet.">
        <title>Comparative genomics of emerging human ehrlichiosis agents.</title>
        <authorList>
            <person name="Dunning Hotopp J.C."/>
            <person name="Lin M."/>
            <person name="Madupu R."/>
            <person name="Crabtree J."/>
            <person name="Angiuoli S.V."/>
            <person name="Eisen J.A."/>
            <person name="Seshadri R."/>
            <person name="Ren Q."/>
            <person name="Wu M."/>
            <person name="Utterback T.R."/>
            <person name="Smith S."/>
            <person name="Lewis M."/>
            <person name="Khouri H."/>
            <person name="Zhang C."/>
            <person name="Niu H."/>
            <person name="Lin Q."/>
            <person name="Ohashi N."/>
            <person name="Zhi N."/>
            <person name="Nelson W.C."/>
            <person name="Brinkac L.M."/>
            <person name="Dodson R.J."/>
            <person name="Rosovitz M.J."/>
            <person name="Sundaram J.P."/>
            <person name="Daugherty S.C."/>
            <person name="Davidsen T."/>
            <person name="Durkin A.S."/>
            <person name="Gwinn M.L."/>
            <person name="Haft D.H."/>
            <person name="Selengut J.D."/>
            <person name="Sullivan S.A."/>
            <person name="Zafar N."/>
            <person name="Zhou L."/>
            <person name="Benahmed F."/>
            <person name="Forberger H."/>
            <person name="Halpin R."/>
            <person name="Mulligan S."/>
            <person name="Robinson J."/>
            <person name="White O."/>
            <person name="Rikihisa Y."/>
            <person name="Tettelin H."/>
        </authorList>
    </citation>
    <scope>NUCLEOTIDE SEQUENCE [LARGE SCALE GENOMIC DNA]</scope>
    <source>
        <strain>ATCC VR-367 / Miyayama</strain>
    </source>
</reference>
<organism>
    <name type="scientific">Neorickettsia sennetsu (strain ATCC VR-367 / Miyayama)</name>
    <name type="common">Ehrlichia sennetsu</name>
    <dbReference type="NCBI Taxonomy" id="222891"/>
    <lineage>
        <taxon>Bacteria</taxon>
        <taxon>Pseudomonadati</taxon>
        <taxon>Pseudomonadota</taxon>
        <taxon>Alphaproteobacteria</taxon>
        <taxon>Rickettsiales</taxon>
        <taxon>Anaplasmataceae</taxon>
        <taxon>Neorickettsia</taxon>
    </lineage>
</organism>
<dbReference type="EC" id="4.1.1.37" evidence="1"/>
<dbReference type="EMBL" id="CP000237">
    <property type="protein sequence ID" value="ABD45817.1"/>
    <property type="molecule type" value="Genomic_DNA"/>
</dbReference>
<dbReference type="RefSeq" id="WP_011452338.1">
    <property type="nucleotide sequence ID" value="NC_007798.1"/>
</dbReference>
<dbReference type="SMR" id="Q2GCG4"/>
<dbReference type="STRING" id="222891.NSE_0968"/>
<dbReference type="KEGG" id="nse:NSE_0968"/>
<dbReference type="eggNOG" id="COG0407">
    <property type="taxonomic scope" value="Bacteria"/>
</dbReference>
<dbReference type="HOGENOM" id="CLU_040933_0_1_5"/>
<dbReference type="OrthoDB" id="9806656at2"/>
<dbReference type="UniPathway" id="UPA00251">
    <property type="reaction ID" value="UER00321"/>
</dbReference>
<dbReference type="Proteomes" id="UP000001942">
    <property type="component" value="Chromosome"/>
</dbReference>
<dbReference type="GO" id="GO:0005829">
    <property type="term" value="C:cytosol"/>
    <property type="evidence" value="ECO:0007669"/>
    <property type="project" value="TreeGrafter"/>
</dbReference>
<dbReference type="GO" id="GO:0004853">
    <property type="term" value="F:uroporphyrinogen decarboxylase activity"/>
    <property type="evidence" value="ECO:0007669"/>
    <property type="project" value="UniProtKB-UniRule"/>
</dbReference>
<dbReference type="GO" id="GO:0006782">
    <property type="term" value="P:protoporphyrinogen IX biosynthetic process"/>
    <property type="evidence" value="ECO:0007669"/>
    <property type="project" value="UniProtKB-UniRule"/>
</dbReference>
<dbReference type="CDD" id="cd00717">
    <property type="entry name" value="URO-D"/>
    <property type="match status" value="1"/>
</dbReference>
<dbReference type="Gene3D" id="3.20.20.210">
    <property type="match status" value="1"/>
</dbReference>
<dbReference type="HAMAP" id="MF_00218">
    <property type="entry name" value="URO_D"/>
    <property type="match status" value="1"/>
</dbReference>
<dbReference type="InterPro" id="IPR038071">
    <property type="entry name" value="UROD/MetE-like_sf"/>
</dbReference>
<dbReference type="InterPro" id="IPR006361">
    <property type="entry name" value="Uroporphyrinogen_deCO2ase_HemE"/>
</dbReference>
<dbReference type="InterPro" id="IPR000257">
    <property type="entry name" value="Uroporphyrinogen_deCOase"/>
</dbReference>
<dbReference type="NCBIfam" id="TIGR01464">
    <property type="entry name" value="hemE"/>
    <property type="match status" value="1"/>
</dbReference>
<dbReference type="PANTHER" id="PTHR21091">
    <property type="entry name" value="METHYLTETRAHYDROFOLATE:HOMOCYSTEINE METHYLTRANSFERASE RELATED"/>
    <property type="match status" value="1"/>
</dbReference>
<dbReference type="PANTHER" id="PTHR21091:SF169">
    <property type="entry name" value="UROPORPHYRINOGEN DECARBOXYLASE"/>
    <property type="match status" value="1"/>
</dbReference>
<dbReference type="Pfam" id="PF01208">
    <property type="entry name" value="URO-D"/>
    <property type="match status" value="1"/>
</dbReference>
<dbReference type="SUPFAM" id="SSF51726">
    <property type="entry name" value="UROD/MetE-like"/>
    <property type="match status" value="1"/>
</dbReference>
<dbReference type="PROSITE" id="PS00907">
    <property type="entry name" value="UROD_2"/>
    <property type="match status" value="1"/>
</dbReference>
<accession>Q2GCG4</accession>
<comment type="function">
    <text evidence="1">Catalyzes the decarboxylation of four acetate groups of uroporphyrinogen-III to yield coproporphyrinogen-III.</text>
</comment>
<comment type="catalytic activity">
    <reaction evidence="1">
        <text>uroporphyrinogen III + 4 H(+) = coproporphyrinogen III + 4 CO2</text>
        <dbReference type="Rhea" id="RHEA:19865"/>
        <dbReference type="ChEBI" id="CHEBI:15378"/>
        <dbReference type="ChEBI" id="CHEBI:16526"/>
        <dbReference type="ChEBI" id="CHEBI:57308"/>
        <dbReference type="ChEBI" id="CHEBI:57309"/>
        <dbReference type="EC" id="4.1.1.37"/>
    </reaction>
</comment>
<comment type="pathway">
    <text evidence="1">Porphyrin-containing compound metabolism; protoporphyrin-IX biosynthesis; coproporphyrinogen-III from 5-aminolevulinate: step 4/4.</text>
</comment>
<comment type="subunit">
    <text evidence="1">Homodimer.</text>
</comment>
<comment type="subcellular location">
    <subcellularLocation>
        <location evidence="1">Cytoplasm</location>
    </subcellularLocation>
</comment>
<comment type="similarity">
    <text evidence="1">Belongs to the uroporphyrinogen decarboxylase family.</text>
</comment>
<gene>
    <name evidence="1" type="primary">hemE</name>
    <name type="ordered locus">NSE_0968</name>
</gene>
<name>DCUP_NEOSM</name>
<keyword id="KW-0963">Cytoplasm</keyword>
<keyword id="KW-0210">Decarboxylase</keyword>
<keyword id="KW-0456">Lyase</keyword>
<keyword id="KW-0627">Porphyrin biosynthesis</keyword>
<protein>
    <recommendedName>
        <fullName evidence="1">Uroporphyrinogen decarboxylase</fullName>
        <shortName evidence="1">UPD</shortName>
        <shortName evidence="1">URO-D</shortName>
        <ecNumber evidence="1">4.1.1.37</ecNumber>
    </recommendedName>
</protein>
<proteinExistence type="inferred from homology"/>
<evidence type="ECO:0000255" key="1">
    <source>
        <dbReference type="HAMAP-Rule" id="MF_00218"/>
    </source>
</evidence>
<sequence>MSLLDKKISTWFMRQAGRYLPEYLKISKEMTFFQMCESPEIASEITLQPIKRFDLDAAIVFSDILVLPRALGCNIDIKKSTGPVIERINNPNWLTYDAFEEKISPTLNTIAITRKSLPQNKSLIGFAGGPWTVALYIIEGGWDKTFLRTKEFINKRYHEFKEIISILTDATIQYLNKQLKHGADFIQIFESFAWAASSNEFKEFIVEPTRRIVSSIDVPVIGFPKGAGVSYLQYVKETSVDVISTDHSLPLDWIADNLQTHAVVQGNLDPYLLAFNKKEALLQTERIVDAFSEKNFIFNLGHGIYKETPLSSVEAVLDFIRARN</sequence>